<organism>
    <name type="scientific">Halalkalibacterium halodurans (strain ATCC BAA-125 / DSM 18197 / FERM 7344 / JCM 9153 / C-125)</name>
    <name type="common">Bacillus halodurans</name>
    <dbReference type="NCBI Taxonomy" id="272558"/>
    <lineage>
        <taxon>Bacteria</taxon>
        <taxon>Bacillati</taxon>
        <taxon>Bacillota</taxon>
        <taxon>Bacilli</taxon>
        <taxon>Bacillales</taxon>
        <taxon>Bacillaceae</taxon>
        <taxon>Halalkalibacterium (ex Joshi et al. 2022)</taxon>
    </lineage>
</organism>
<dbReference type="EMBL" id="BA000004">
    <property type="protein sequence ID" value="BAB07333.1"/>
    <property type="molecule type" value="Genomic_DNA"/>
</dbReference>
<dbReference type="PIR" id="F84101">
    <property type="entry name" value="F84101"/>
</dbReference>
<dbReference type="RefSeq" id="WP_010899742.1">
    <property type="nucleotide sequence ID" value="NC_002570.2"/>
</dbReference>
<dbReference type="SMR" id="Q9K6W0"/>
<dbReference type="STRING" id="272558.gene:10729527"/>
<dbReference type="KEGG" id="bha:BH3614"/>
<dbReference type="eggNOG" id="COG1345">
    <property type="taxonomic scope" value="Bacteria"/>
</dbReference>
<dbReference type="HOGENOM" id="CLU_015182_0_2_9"/>
<dbReference type="OrthoDB" id="9776025at2"/>
<dbReference type="Proteomes" id="UP000001258">
    <property type="component" value="Chromosome"/>
</dbReference>
<dbReference type="GO" id="GO:0009421">
    <property type="term" value="C:bacterial-type flagellum filament cap"/>
    <property type="evidence" value="ECO:0007669"/>
    <property type="project" value="InterPro"/>
</dbReference>
<dbReference type="GO" id="GO:0009424">
    <property type="term" value="C:bacterial-type flagellum hook"/>
    <property type="evidence" value="ECO:0007669"/>
    <property type="project" value="InterPro"/>
</dbReference>
<dbReference type="GO" id="GO:0005576">
    <property type="term" value="C:extracellular region"/>
    <property type="evidence" value="ECO:0007669"/>
    <property type="project" value="UniProtKB-SubCell"/>
</dbReference>
<dbReference type="GO" id="GO:0071973">
    <property type="term" value="P:bacterial-type flagellum-dependent cell motility"/>
    <property type="evidence" value="ECO:0007669"/>
    <property type="project" value="TreeGrafter"/>
</dbReference>
<dbReference type="GO" id="GO:0007155">
    <property type="term" value="P:cell adhesion"/>
    <property type="evidence" value="ECO:0007669"/>
    <property type="project" value="InterPro"/>
</dbReference>
<dbReference type="InterPro" id="IPR040026">
    <property type="entry name" value="FliD"/>
</dbReference>
<dbReference type="InterPro" id="IPR010809">
    <property type="entry name" value="FliD_C"/>
</dbReference>
<dbReference type="InterPro" id="IPR003481">
    <property type="entry name" value="FliD_N"/>
</dbReference>
<dbReference type="PANTHER" id="PTHR30288">
    <property type="entry name" value="FLAGELLAR CAP/ASSEMBLY PROTEIN FLID"/>
    <property type="match status" value="1"/>
</dbReference>
<dbReference type="PANTHER" id="PTHR30288:SF0">
    <property type="entry name" value="FLAGELLAR HOOK-ASSOCIATED PROTEIN 2"/>
    <property type="match status" value="1"/>
</dbReference>
<dbReference type="Pfam" id="PF07195">
    <property type="entry name" value="FliD_C"/>
    <property type="match status" value="1"/>
</dbReference>
<dbReference type="Pfam" id="PF02465">
    <property type="entry name" value="FliD_N"/>
    <property type="match status" value="1"/>
</dbReference>
<accession>Q9K6W0</accession>
<evidence type="ECO:0000250" key="1"/>
<evidence type="ECO:0000255" key="2"/>
<evidence type="ECO:0000305" key="3"/>
<protein>
    <recommendedName>
        <fullName>Flagellar hook-associated protein 2</fullName>
        <shortName>HAP2</shortName>
    </recommendedName>
    <alternativeName>
        <fullName>Filament cap protein</fullName>
    </alternativeName>
    <alternativeName>
        <fullName>Flagellar cap protein</fullName>
    </alternativeName>
</protein>
<gene>
    <name type="primary">fliD</name>
    <name type="ordered locus">BH3614</name>
</gene>
<keyword id="KW-0975">Bacterial flagellum</keyword>
<keyword id="KW-0175">Coiled coil</keyword>
<keyword id="KW-1185">Reference proteome</keyword>
<keyword id="KW-0964">Secreted</keyword>
<sequence>MRIGGIASGIDTESMIKQLMQVERIPLNKFTQRKITLEWQRDAYREVNLLLKKLDDAAANIRLRSSLNTKEASTTSKAFTAQPNAQVRNGSYQLKVNQIATQSRNISSEAISNGSTKISTTRALNEQNVYADGLNIEDYHGQTFTITTYNSSGAAVEKSFTIDTSKSLDSLFKDINSAGLGVRMSYNSTYDKVIIERTETGAFNAADGSNDYQIVFGGDTGFLNDVLKLNQANEVSGTNAEVEFIDPIMSSEPIVVSDSRTNRVTVGGITFSLTGTTEGFETLNVSSNTDAAFEKVMEFVDTYNATITELRSLLSEPRYRDYPPLTEEQRRELSEREAELWDEKAKSGLLRNDSMLNSLLAQMRADLYAPVQTNGQFSSITQIGITTSSDYRLGGFLEVDEDKLRAALEADPDSVHQLLNGTANSSLTSIPVKDRTSQQRSEIYSQTGLVGRIRSSLSSTMNDIVARAGNERRTEQQFTIGRQILDVDKRIDHFQQRLIQIENRYWAQFSRMEQMMNQANAQYASLQQFFVT</sequence>
<comment type="function">
    <text evidence="1">Required for the morphogenesis and for the elongation of the flagellar filament by facilitating polymerization of the flagellin monomers at the tip of growing filament. Forms a capping structure, which prevents flagellin subunits (transported through the central channel of the flagellum) from leaking out without polymerization at the distal end (By similarity).</text>
</comment>
<comment type="subunit">
    <text evidence="1">Homopentamer.</text>
</comment>
<comment type="subcellular location">
    <subcellularLocation>
        <location>Secreted</location>
    </subcellularLocation>
    <subcellularLocation>
        <location>Bacterial flagellum</location>
    </subcellularLocation>
</comment>
<comment type="similarity">
    <text evidence="3">Belongs to the FliD family.</text>
</comment>
<proteinExistence type="inferred from homology"/>
<feature type="chain" id="PRO_0000177013" description="Flagellar hook-associated protein 2">
    <location>
        <begin position="1"/>
        <end position="532"/>
    </location>
</feature>
<feature type="coiled-coil region" evidence="2">
    <location>
        <begin position="507"/>
        <end position="528"/>
    </location>
</feature>
<name>FLID_HALH5</name>
<reference key="1">
    <citation type="journal article" date="2000" name="Nucleic Acids Res.">
        <title>Complete genome sequence of the alkaliphilic bacterium Bacillus halodurans and genomic sequence comparison with Bacillus subtilis.</title>
        <authorList>
            <person name="Takami H."/>
            <person name="Nakasone K."/>
            <person name="Takaki Y."/>
            <person name="Maeno G."/>
            <person name="Sasaki R."/>
            <person name="Masui N."/>
            <person name="Fuji F."/>
            <person name="Hirama C."/>
            <person name="Nakamura Y."/>
            <person name="Ogasawara N."/>
            <person name="Kuhara S."/>
            <person name="Horikoshi K."/>
        </authorList>
    </citation>
    <scope>NUCLEOTIDE SEQUENCE [LARGE SCALE GENOMIC DNA]</scope>
    <source>
        <strain>ATCC BAA-125 / DSM 18197 / FERM 7344 / JCM 9153 / C-125</strain>
    </source>
</reference>